<proteinExistence type="inferred from homology"/>
<accession>A6LIY2</accession>
<feature type="chain" id="PRO_1000048752" description="Chromosomal replication initiator protein DnaA">
    <location>
        <begin position="1"/>
        <end position="437"/>
    </location>
</feature>
<feature type="region of interest" description="Domain I, interacts with DnaA modulators" evidence="1">
    <location>
        <begin position="1"/>
        <end position="67"/>
    </location>
</feature>
<feature type="region of interest" description="Domain II" evidence="1">
    <location>
        <begin position="67"/>
        <end position="97"/>
    </location>
</feature>
<feature type="region of interest" description="Domain III, AAA+ region" evidence="1">
    <location>
        <begin position="98"/>
        <end position="313"/>
    </location>
</feature>
<feature type="region of interest" description="Domain IV, binds dsDNA" evidence="1">
    <location>
        <begin position="314"/>
        <end position="437"/>
    </location>
</feature>
<feature type="binding site" evidence="1">
    <location>
        <position position="141"/>
    </location>
    <ligand>
        <name>ATP</name>
        <dbReference type="ChEBI" id="CHEBI:30616"/>
    </ligand>
</feature>
<feature type="binding site" evidence="1">
    <location>
        <position position="143"/>
    </location>
    <ligand>
        <name>ATP</name>
        <dbReference type="ChEBI" id="CHEBI:30616"/>
    </ligand>
</feature>
<feature type="binding site" evidence="1">
    <location>
        <position position="144"/>
    </location>
    <ligand>
        <name>ATP</name>
        <dbReference type="ChEBI" id="CHEBI:30616"/>
    </ligand>
</feature>
<feature type="binding site" evidence="1">
    <location>
        <position position="145"/>
    </location>
    <ligand>
        <name>ATP</name>
        <dbReference type="ChEBI" id="CHEBI:30616"/>
    </ligand>
</feature>
<reference key="1">
    <citation type="submission" date="2007-05" db="EMBL/GenBank/DDBJ databases">
        <title>Complete sequence of Thermosipho melanesiensis BI429.</title>
        <authorList>
            <consortium name="US DOE Joint Genome Institute"/>
            <person name="Copeland A."/>
            <person name="Lucas S."/>
            <person name="Lapidus A."/>
            <person name="Barry K."/>
            <person name="Glavina del Rio T."/>
            <person name="Dalin E."/>
            <person name="Tice H."/>
            <person name="Pitluck S."/>
            <person name="Chertkov O."/>
            <person name="Brettin T."/>
            <person name="Bruce D."/>
            <person name="Detter J.C."/>
            <person name="Han C."/>
            <person name="Schmutz J."/>
            <person name="Larimer F."/>
            <person name="Land M."/>
            <person name="Hauser L."/>
            <person name="Kyrpides N."/>
            <person name="Mikhailova N."/>
            <person name="Nelson K."/>
            <person name="Gogarten J.P."/>
            <person name="Noll K."/>
            <person name="Richardson P."/>
        </authorList>
    </citation>
    <scope>NUCLEOTIDE SEQUENCE [LARGE SCALE GENOMIC DNA]</scope>
    <source>
        <strain>DSM 12029 / CIP 104789 / BI429</strain>
    </source>
</reference>
<gene>
    <name evidence="1" type="primary">dnaA</name>
    <name type="ordered locus">Tmel_0001</name>
</gene>
<organism>
    <name type="scientific">Thermosipho melanesiensis (strain DSM 12029 / CIP 104789 / BI429)</name>
    <dbReference type="NCBI Taxonomy" id="391009"/>
    <lineage>
        <taxon>Bacteria</taxon>
        <taxon>Thermotogati</taxon>
        <taxon>Thermotogota</taxon>
        <taxon>Thermotogae</taxon>
        <taxon>Thermotogales</taxon>
        <taxon>Fervidobacteriaceae</taxon>
        <taxon>Thermosipho</taxon>
    </lineage>
</organism>
<dbReference type="EMBL" id="CP000716">
    <property type="protein sequence ID" value="ABR29883.1"/>
    <property type="molecule type" value="Genomic_DNA"/>
</dbReference>
<dbReference type="RefSeq" id="WP_011967365.1">
    <property type="nucleotide sequence ID" value="NC_009616.1"/>
</dbReference>
<dbReference type="SMR" id="A6LIY2"/>
<dbReference type="STRING" id="391009.Tmel_0001"/>
<dbReference type="KEGG" id="tme:Tmel_0001"/>
<dbReference type="eggNOG" id="COG0593">
    <property type="taxonomic scope" value="Bacteria"/>
</dbReference>
<dbReference type="HOGENOM" id="CLU_026910_3_0_0"/>
<dbReference type="OrthoDB" id="9807019at2"/>
<dbReference type="Proteomes" id="UP000001110">
    <property type="component" value="Chromosome"/>
</dbReference>
<dbReference type="GO" id="GO:0005737">
    <property type="term" value="C:cytoplasm"/>
    <property type="evidence" value="ECO:0007669"/>
    <property type="project" value="UniProtKB-SubCell"/>
</dbReference>
<dbReference type="GO" id="GO:0005886">
    <property type="term" value="C:plasma membrane"/>
    <property type="evidence" value="ECO:0007669"/>
    <property type="project" value="TreeGrafter"/>
</dbReference>
<dbReference type="GO" id="GO:0005524">
    <property type="term" value="F:ATP binding"/>
    <property type="evidence" value="ECO:0007669"/>
    <property type="project" value="UniProtKB-UniRule"/>
</dbReference>
<dbReference type="GO" id="GO:0016887">
    <property type="term" value="F:ATP hydrolysis activity"/>
    <property type="evidence" value="ECO:0007669"/>
    <property type="project" value="InterPro"/>
</dbReference>
<dbReference type="GO" id="GO:0003688">
    <property type="term" value="F:DNA replication origin binding"/>
    <property type="evidence" value="ECO:0007669"/>
    <property type="project" value="UniProtKB-UniRule"/>
</dbReference>
<dbReference type="GO" id="GO:0008289">
    <property type="term" value="F:lipid binding"/>
    <property type="evidence" value="ECO:0007669"/>
    <property type="project" value="UniProtKB-KW"/>
</dbReference>
<dbReference type="GO" id="GO:0006270">
    <property type="term" value="P:DNA replication initiation"/>
    <property type="evidence" value="ECO:0007669"/>
    <property type="project" value="UniProtKB-UniRule"/>
</dbReference>
<dbReference type="GO" id="GO:0006275">
    <property type="term" value="P:regulation of DNA replication"/>
    <property type="evidence" value="ECO:0007669"/>
    <property type="project" value="UniProtKB-UniRule"/>
</dbReference>
<dbReference type="CDD" id="cd00009">
    <property type="entry name" value="AAA"/>
    <property type="match status" value="1"/>
</dbReference>
<dbReference type="CDD" id="cd06571">
    <property type="entry name" value="Bac_DnaA_C"/>
    <property type="match status" value="1"/>
</dbReference>
<dbReference type="FunFam" id="3.40.50.300:FF:000668">
    <property type="entry name" value="Chromosomal replication initiator protein DnaA"/>
    <property type="match status" value="1"/>
</dbReference>
<dbReference type="Gene3D" id="1.10.1750.10">
    <property type="match status" value="1"/>
</dbReference>
<dbReference type="Gene3D" id="1.10.8.60">
    <property type="match status" value="1"/>
</dbReference>
<dbReference type="Gene3D" id="3.30.300.180">
    <property type="match status" value="1"/>
</dbReference>
<dbReference type="Gene3D" id="3.40.50.300">
    <property type="entry name" value="P-loop containing nucleotide triphosphate hydrolases"/>
    <property type="match status" value="1"/>
</dbReference>
<dbReference type="HAMAP" id="MF_00377">
    <property type="entry name" value="DnaA_bact"/>
    <property type="match status" value="1"/>
</dbReference>
<dbReference type="InterPro" id="IPR003593">
    <property type="entry name" value="AAA+_ATPase"/>
</dbReference>
<dbReference type="InterPro" id="IPR001957">
    <property type="entry name" value="Chromosome_initiator_DnaA"/>
</dbReference>
<dbReference type="InterPro" id="IPR020591">
    <property type="entry name" value="Chromosome_initiator_DnaA-like"/>
</dbReference>
<dbReference type="InterPro" id="IPR013159">
    <property type="entry name" value="DnaA_C"/>
</dbReference>
<dbReference type="InterPro" id="IPR013317">
    <property type="entry name" value="DnaA_dom"/>
</dbReference>
<dbReference type="InterPro" id="IPR024633">
    <property type="entry name" value="DnaA_N_dom"/>
</dbReference>
<dbReference type="InterPro" id="IPR038454">
    <property type="entry name" value="DnaA_N_sf"/>
</dbReference>
<dbReference type="InterPro" id="IPR027417">
    <property type="entry name" value="P-loop_NTPase"/>
</dbReference>
<dbReference type="InterPro" id="IPR010921">
    <property type="entry name" value="Trp_repressor/repl_initiator"/>
</dbReference>
<dbReference type="NCBIfam" id="TIGR00362">
    <property type="entry name" value="DnaA"/>
    <property type="match status" value="1"/>
</dbReference>
<dbReference type="NCBIfam" id="NF001154">
    <property type="entry name" value="PRK00149.3-3"/>
    <property type="match status" value="1"/>
</dbReference>
<dbReference type="PANTHER" id="PTHR30050">
    <property type="entry name" value="CHROMOSOMAL REPLICATION INITIATOR PROTEIN DNAA"/>
    <property type="match status" value="1"/>
</dbReference>
<dbReference type="PANTHER" id="PTHR30050:SF2">
    <property type="entry name" value="CHROMOSOMAL REPLICATION INITIATOR PROTEIN DNAA"/>
    <property type="match status" value="1"/>
</dbReference>
<dbReference type="Pfam" id="PF00308">
    <property type="entry name" value="Bac_DnaA"/>
    <property type="match status" value="1"/>
</dbReference>
<dbReference type="Pfam" id="PF08299">
    <property type="entry name" value="Bac_DnaA_C"/>
    <property type="match status" value="1"/>
</dbReference>
<dbReference type="Pfam" id="PF11638">
    <property type="entry name" value="DnaA_N"/>
    <property type="match status" value="1"/>
</dbReference>
<dbReference type="PRINTS" id="PR00051">
    <property type="entry name" value="DNAA"/>
</dbReference>
<dbReference type="SMART" id="SM00382">
    <property type="entry name" value="AAA"/>
    <property type="match status" value="1"/>
</dbReference>
<dbReference type="SMART" id="SM00760">
    <property type="entry name" value="Bac_DnaA_C"/>
    <property type="match status" value="1"/>
</dbReference>
<dbReference type="SUPFAM" id="SSF52540">
    <property type="entry name" value="P-loop containing nucleoside triphosphate hydrolases"/>
    <property type="match status" value="1"/>
</dbReference>
<dbReference type="SUPFAM" id="SSF48295">
    <property type="entry name" value="TrpR-like"/>
    <property type="match status" value="1"/>
</dbReference>
<comment type="function">
    <text evidence="1">Plays an essential role in the initiation and regulation of chromosomal replication. ATP-DnaA binds to the origin of replication (oriC) to initiate formation of the DNA replication initiation complex once per cell cycle. Binds the DnaA box (a 9 base pair repeat at the origin) and separates the double-stranded (ds)DNA. Forms a right-handed helical filament on oriC DNA; dsDNA binds to the exterior of the filament while single-stranded (ss)DNA is stabiized in the filament's interior. The ATP-DnaA-oriC complex binds and stabilizes one strand of the AT-rich DNA unwinding element (DUE), permitting loading of DNA polymerase. After initiation quickly degrades to an ADP-DnaA complex that is not apt for DNA replication. Binds acidic phospholipids.</text>
</comment>
<comment type="subunit">
    <text evidence="1">Oligomerizes as a right-handed, spiral filament on DNA at oriC.</text>
</comment>
<comment type="subcellular location">
    <subcellularLocation>
        <location evidence="1">Cytoplasm</location>
    </subcellularLocation>
</comment>
<comment type="domain">
    <text evidence="1">Domain I is involved in oligomerization and binding regulators, domain II is flexibile and of varying length in different bacteria, domain III forms the AAA+ region, while domain IV binds dsDNA.</text>
</comment>
<comment type="similarity">
    <text evidence="1">Belongs to the DnaA family.</text>
</comment>
<sequence>MKNKIIASLKERISRQNWENWFLDFNIRELKDNHVVFEVGNFFIKERLEKKFNKIISKVVKDILGKDATYEITFKEIPYETKVESGPLIKKRPLLITPLNPKYTFENLVVGEFNKFAYNVFLEASKNPGFYNPIFLYSGVGLGKTHLAQALGNYLLETDPDMKVAYLTSEEFMNEMFSAIKNGNIDEFREKYRKKADILIIDDIQFLIGIKSAQTELFHTFNTIHEAGKQIIICSDRTPQELKDFHSRMISRFQMGLLVKIEKPSSEDLFKIGKKISEMKNVEIDDEIIKYISKIYDNPRLIHGAILRLIAYRNLYGTLNLSIAESILTNVSKPPKSFEEKLLEILSEIFDCSPDDITSSKRTKNISYARKIGMYFAVKKLNLSTRDVGTIFKKSHSSVVQNVKQVEKLLKEGNVILKNYLKQIDKMSKGFAQGESM</sequence>
<name>DNAA_THEM4</name>
<keyword id="KW-0067">ATP-binding</keyword>
<keyword id="KW-0963">Cytoplasm</keyword>
<keyword id="KW-0235">DNA replication</keyword>
<keyword id="KW-0238">DNA-binding</keyword>
<keyword id="KW-0446">Lipid-binding</keyword>
<keyword id="KW-0547">Nucleotide-binding</keyword>
<protein>
    <recommendedName>
        <fullName evidence="1">Chromosomal replication initiator protein DnaA</fullName>
    </recommendedName>
</protein>
<evidence type="ECO:0000255" key="1">
    <source>
        <dbReference type="HAMAP-Rule" id="MF_00377"/>
    </source>
</evidence>